<feature type="chain" id="PRO_1000054949" description="Small ribosomal subunit protein uS17">
    <location>
        <begin position="1"/>
        <end position="84"/>
    </location>
</feature>
<gene>
    <name evidence="1" type="primary">rpsQ</name>
    <name type="ordered locus">Ecok1_32960</name>
    <name type="ORF">APECO1_3138</name>
</gene>
<accession>A1AGK0</accession>
<name>RS17_ECOK1</name>
<reference key="1">
    <citation type="journal article" date="2007" name="J. Bacteriol.">
        <title>The genome sequence of avian pathogenic Escherichia coli strain O1:K1:H7 shares strong similarities with human extraintestinal pathogenic E. coli genomes.</title>
        <authorList>
            <person name="Johnson T.J."/>
            <person name="Kariyawasam S."/>
            <person name="Wannemuehler Y."/>
            <person name="Mangiamele P."/>
            <person name="Johnson S.J."/>
            <person name="Doetkott C."/>
            <person name="Skyberg J.A."/>
            <person name="Lynne A.M."/>
            <person name="Johnson J.R."/>
            <person name="Nolan L.K."/>
        </authorList>
    </citation>
    <scope>NUCLEOTIDE SEQUENCE [LARGE SCALE GENOMIC DNA]</scope>
</reference>
<proteinExistence type="inferred from homology"/>
<comment type="function">
    <text evidence="1">One of the primary rRNA binding proteins, it binds specifically to the 5'-end of 16S ribosomal RNA.</text>
</comment>
<comment type="subunit">
    <text evidence="1">Part of the 30S ribosomal subunit.</text>
</comment>
<comment type="similarity">
    <text evidence="1">Belongs to the universal ribosomal protein uS17 family.</text>
</comment>
<keyword id="KW-1185">Reference proteome</keyword>
<keyword id="KW-0687">Ribonucleoprotein</keyword>
<keyword id="KW-0689">Ribosomal protein</keyword>
<keyword id="KW-0694">RNA-binding</keyword>
<keyword id="KW-0699">rRNA-binding</keyword>
<dbReference type="EMBL" id="CP000468">
    <property type="protein sequence ID" value="ABJ02790.1"/>
    <property type="molecule type" value="Genomic_DNA"/>
</dbReference>
<dbReference type="RefSeq" id="WP_000130100.1">
    <property type="nucleotide sequence ID" value="NZ_CADILS010000044.1"/>
</dbReference>
<dbReference type="SMR" id="A1AGK0"/>
<dbReference type="GeneID" id="93778676"/>
<dbReference type="KEGG" id="ecv:APECO1_3138"/>
<dbReference type="HOGENOM" id="CLU_073626_1_1_6"/>
<dbReference type="Proteomes" id="UP000008216">
    <property type="component" value="Chromosome"/>
</dbReference>
<dbReference type="GO" id="GO:0022627">
    <property type="term" value="C:cytosolic small ribosomal subunit"/>
    <property type="evidence" value="ECO:0007669"/>
    <property type="project" value="TreeGrafter"/>
</dbReference>
<dbReference type="GO" id="GO:0019843">
    <property type="term" value="F:rRNA binding"/>
    <property type="evidence" value="ECO:0007669"/>
    <property type="project" value="UniProtKB-UniRule"/>
</dbReference>
<dbReference type="GO" id="GO:0003735">
    <property type="term" value="F:structural constituent of ribosome"/>
    <property type="evidence" value="ECO:0007669"/>
    <property type="project" value="InterPro"/>
</dbReference>
<dbReference type="GO" id="GO:0006412">
    <property type="term" value="P:translation"/>
    <property type="evidence" value="ECO:0007669"/>
    <property type="project" value="UniProtKB-UniRule"/>
</dbReference>
<dbReference type="CDD" id="cd00364">
    <property type="entry name" value="Ribosomal_uS17"/>
    <property type="match status" value="1"/>
</dbReference>
<dbReference type="FunFam" id="2.40.50.140:FF:000014">
    <property type="entry name" value="30S ribosomal protein S17"/>
    <property type="match status" value="1"/>
</dbReference>
<dbReference type="Gene3D" id="2.40.50.140">
    <property type="entry name" value="Nucleic acid-binding proteins"/>
    <property type="match status" value="1"/>
</dbReference>
<dbReference type="HAMAP" id="MF_01345_B">
    <property type="entry name" value="Ribosomal_uS17_B"/>
    <property type="match status" value="1"/>
</dbReference>
<dbReference type="InterPro" id="IPR012340">
    <property type="entry name" value="NA-bd_OB-fold"/>
</dbReference>
<dbReference type="InterPro" id="IPR000266">
    <property type="entry name" value="Ribosomal_uS17"/>
</dbReference>
<dbReference type="InterPro" id="IPR019984">
    <property type="entry name" value="Ribosomal_uS17_bact/chlr"/>
</dbReference>
<dbReference type="InterPro" id="IPR019979">
    <property type="entry name" value="Ribosomal_uS17_CS"/>
</dbReference>
<dbReference type="NCBIfam" id="NF004123">
    <property type="entry name" value="PRK05610.1"/>
    <property type="match status" value="1"/>
</dbReference>
<dbReference type="NCBIfam" id="TIGR03635">
    <property type="entry name" value="uS17_bact"/>
    <property type="match status" value="1"/>
</dbReference>
<dbReference type="PANTHER" id="PTHR10744">
    <property type="entry name" value="40S RIBOSOMAL PROTEIN S11 FAMILY MEMBER"/>
    <property type="match status" value="1"/>
</dbReference>
<dbReference type="PANTHER" id="PTHR10744:SF1">
    <property type="entry name" value="SMALL RIBOSOMAL SUBUNIT PROTEIN US17M"/>
    <property type="match status" value="1"/>
</dbReference>
<dbReference type="Pfam" id="PF00366">
    <property type="entry name" value="Ribosomal_S17"/>
    <property type="match status" value="1"/>
</dbReference>
<dbReference type="PRINTS" id="PR00973">
    <property type="entry name" value="RIBOSOMALS17"/>
</dbReference>
<dbReference type="SUPFAM" id="SSF50249">
    <property type="entry name" value="Nucleic acid-binding proteins"/>
    <property type="match status" value="1"/>
</dbReference>
<dbReference type="PROSITE" id="PS00056">
    <property type="entry name" value="RIBOSOMAL_S17"/>
    <property type="match status" value="1"/>
</dbReference>
<protein>
    <recommendedName>
        <fullName evidence="1">Small ribosomal subunit protein uS17</fullName>
    </recommendedName>
    <alternativeName>
        <fullName evidence="2">30S ribosomal protein S17</fullName>
    </alternativeName>
</protein>
<evidence type="ECO:0000255" key="1">
    <source>
        <dbReference type="HAMAP-Rule" id="MF_01345"/>
    </source>
</evidence>
<evidence type="ECO:0000305" key="2"/>
<sequence length="84" mass="9704">MTDKIRTLQGRVVSDKMEKSIVVAIERFVKHPIYGKFIKRTTKLHVHDENNECGIGDVVEIRECRPLSKTKSWTLVRVVEKAVL</sequence>
<organism>
    <name type="scientific">Escherichia coli O1:K1 / APEC</name>
    <dbReference type="NCBI Taxonomy" id="405955"/>
    <lineage>
        <taxon>Bacteria</taxon>
        <taxon>Pseudomonadati</taxon>
        <taxon>Pseudomonadota</taxon>
        <taxon>Gammaproteobacteria</taxon>
        <taxon>Enterobacterales</taxon>
        <taxon>Enterobacteriaceae</taxon>
        <taxon>Escherichia</taxon>
    </lineage>
</organism>